<sequence>MKQLFRQWYDLSEIKKELTTRNWFPATSGNISIKVSHDPLTFLITASGKDKTKTTPDDFLLVNHQGIPVLETELRPSAETILHTHIYNNTNAGCVLHVHTTDNNVITNLYSDAVTLQNQEIIKALDIWEEGATINIPIIENDAHIPTLGEKFRKHIQGDSGAVLIRNHGITVWGRDSFDAKKRLEAYEFLFQFHIKLLSIQGGVSNGANSYS</sequence>
<dbReference type="EC" id="4.2.1.109" evidence="1"/>
<dbReference type="EMBL" id="CP000903">
    <property type="protein sequence ID" value="ABY45035.1"/>
    <property type="molecule type" value="Genomic_DNA"/>
</dbReference>
<dbReference type="RefSeq" id="WP_012261637.1">
    <property type="nucleotide sequence ID" value="NC_010184.1"/>
</dbReference>
<dbReference type="SMR" id="A9VFE1"/>
<dbReference type="KEGG" id="bwe:BcerKBAB4_3867"/>
<dbReference type="eggNOG" id="COG0235">
    <property type="taxonomic scope" value="Bacteria"/>
</dbReference>
<dbReference type="HOGENOM" id="CLU_006033_4_1_9"/>
<dbReference type="UniPathway" id="UPA00904">
    <property type="reaction ID" value="UER00875"/>
</dbReference>
<dbReference type="Proteomes" id="UP000002154">
    <property type="component" value="Chromosome"/>
</dbReference>
<dbReference type="GO" id="GO:0005737">
    <property type="term" value="C:cytoplasm"/>
    <property type="evidence" value="ECO:0007669"/>
    <property type="project" value="InterPro"/>
</dbReference>
<dbReference type="GO" id="GO:0046570">
    <property type="term" value="F:methylthioribulose 1-phosphate dehydratase activity"/>
    <property type="evidence" value="ECO:0007669"/>
    <property type="project" value="UniProtKB-UniRule"/>
</dbReference>
<dbReference type="GO" id="GO:0008270">
    <property type="term" value="F:zinc ion binding"/>
    <property type="evidence" value="ECO:0007669"/>
    <property type="project" value="UniProtKB-UniRule"/>
</dbReference>
<dbReference type="GO" id="GO:0019509">
    <property type="term" value="P:L-methionine salvage from methylthioadenosine"/>
    <property type="evidence" value="ECO:0007669"/>
    <property type="project" value="UniProtKB-UniRule"/>
</dbReference>
<dbReference type="FunFam" id="3.40.225.10:FF:000007">
    <property type="entry name" value="Methylthioribulose-1-phosphate dehydratase"/>
    <property type="match status" value="1"/>
</dbReference>
<dbReference type="Gene3D" id="3.40.225.10">
    <property type="entry name" value="Class II aldolase/adducin N-terminal domain"/>
    <property type="match status" value="1"/>
</dbReference>
<dbReference type="HAMAP" id="MF_01677">
    <property type="entry name" value="Salvage_MtnB"/>
    <property type="match status" value="1"/>
</dbReference>
<dbReference type="InterPro" id="IPR001303">
    <property type="entry name" value="Aldolase_II/adducin_N"/>
</dbReference>
<dbReference type="InterPro" id="IPR036409">
    <property type="entry name" value="Aldolase_II/adducin_N_sf"/>
</dbReference>
<dbReference type="InterPro" id="IPR017714">
    <property type="entry name" value="MethylthioRu-1-P_deHdtase_MtnB"/>
</dbReference>
<dbReference type="NCBIfam" id="NF005244">
    <property type="entry name" value="PRK06754.1"/>
    <property type="match status" value="1"/>
</dbReference>
<dbReference type="NCBIfam" id="TIGR03328">
    <property type="entry name" value="salvage_mtnB"/>
    <property type="match status" value="1"/>
</dbReference>
<dbReference type="PANTHER" id="PTHR10640">
    <property type="entry name" value="METHYLTHIORIBULOSE-1-PHOSPHATE DEHYDRATASE"/>
    <property type="match status" value="1"/>
</dbReference>
<dbReference type="PANTHER" id="PTHR10640:SF7">
    <property type="entry name" value="METHYLTHIORIBULOSE-1-PHOSPHATE DEHYDRATASE"/>
    <property type="match status" value="1"/>
</dbReference>
<dbReference type="Pfam" id="PF00596">
    <property type="entry name" value="Aldolase_II"/>
    <property type="match status" value="1"/>
</dbReference>
<dbReference type="SMART" id="SM01007">
    <property type="entry name" value="Aldolase_II"/>
    <property type="match status" value="1"/>
</dbReference>
<dbReference type="SUPFAM" id="SSF53639">
    <property type="entry name" value="AraD/HMP-PK domain-like"/>
    <property type="match status" value="1"/>
</dbReference>
<name>MTNB_BACMK</name>
<comment type="function">
    <text evidence="1">Catalyzes the dehydration of methylthioribulose-1-phosphate (MTRu-1-P) into 2,3-diketo-5-methylthiopentyl-1-phosphate (DK-MTP-1-P).</text>
</comment>
<comment type="catalytic activity">
    <reaction evidence="1">
        <text>5-(methylsulfanyl)-D-ribulose 1-phosphate = 5-methylsulfanyl-2,3-dioxopentyl phosphate + H2O</text>
        <dbReference type="Rhea" id="RHEA:15549"/>
        <dbReference type="ChEBI" id="CHEBI:15377"/>
        <dbReference type="ChEBI" id="CHEBI:58548"/>
        <dbReference type="ChEBI" id="CHEBI:58828"/>
        <dbReference type="EC" id="4.2.1.109"/>
    </reaction>
</comment>
<comment type="cofactor">
    <cofactor evidence="1">
        <name>Zn(2+)</name>
        <dbReference type="ChEBI" id="CHEBI:29105"/>
    </cofactor>
    <text evidence="1">Binds 1 zinc ion per subunit.</text>
</comment>
<comment type="pathway">
    <text evidence="1">Amino-acid biosynthesis; L-methionine biosynthesis via salvage pathway; L-methionine from S-methyl-5-thio-alpha-D-ribose 1-phosphate: step 2/6.</text>
</comment>
<comment type="subunit">
    <text evidence="1">Homotetramer.</text>
</comment>
<comment type="similarity">
    <text evidence="1">Belongs to the aldolase class II family. MtnB subfamily.</text>
</comment>
<feature type="chain" id="PRO_0000357071" description="Methylthioribulose-1-phosphate dehydratase">
    <location>
        <begin position="1"/>
        <end position="212"/>
    </location>
</feature>
<feature type="binding site" evidence="1">
    <location>
        <position position="97"/>
    </location>
    <ligand>
        <name>Zn(2+)</name>
        <dbReference type="ChEBI" id="CHEBI:29105"/>
    </ligand>
</feature>
<feature type="binding site" evidence="1">
    <location>
        <position position="99"/>
    </location>
    <ligand>
        <name>Zn(2+)</name>
        <dbReference type="ChEBI" id="CHEBI:29105"/>
    </ligand>
</feature>
<organism>
    <name type="scientific">Bacillus mycoides (strain KBAB4)</name>
    <name type="common">Bacillus weihenstephanensis</name>
    <dbReference type="NCBI Taxonomy" id="315730"/>
    <lineage>
        <taxon>Bacteria</taxon>
        <taxon>Bacillati</taxon>
        <taxon>Bacillota</taxon>
        <taxon>Bacilli</taxon>
        <taxon>Bacillales</taxon>
        <taxon>Bacillaceae</taxon>
        <taxon>Bacillus</taxon>
        <taxon>Bacillus cereus group</taxon>
    </lineage>
</organism>
<proteinExistence type="inferred from homology"/>
<protein>
    <recommendedName>
        <fullName evidence="1">Methylthioribulose-1-phosphate dehydratase</fullName>
        <shortName evidence="1">MTRu-1-P dehydratase</shortName>
        <ecNumber evidence="1">4.2.1.109</ecNumber>
    </recommendedName>
</protein>
<gene>
    <name evidence="1" type="primary">mtnB</name>
    <name type="ordered locus">BcerKBAB4_3867</name>
</gene>
<accession>A9VFE1</accession>
<reference key="1">
    <citation type="journal article" date="2008" name="Chem. Biol. Interact.">
        <title>Extending the Bacillus cereus group genomics to putative food-borne pathogens of different toxicity.</title>
        <authorList>
            <person name="Lapidus A."/>
            <person name="Goltsman E."/>
            <person name="Auger S."/>
            <person name="Galleron N."/>
            <person name="Segurens B."/>
            <person name="Dossat C."/>
            <person name="Land M.L."/>
            <person name="Broussolle V."/>
            <person name="Brillard J."/>
            <person name="Guinebretiere M.-H."/>
            <person name="Sanchis V."/>
            <person name="Nguen-the C."/>
            <person name="Lereclus D."/>
            <person name="Richardson P."/>
            <person name="Wincker P."/>
            <person name="Weissenbach J."/>
            <person name="Ehrlich S.D."/>
            <person name="Sorokin A."/>
        </authorList>
    </citation>
    <scope>NUCLEOTIDE SEQUENCE [LARGE SCALE GENOMIC DNA]</scope>
    <source>
        <strain>KBAB4</strain>
    </source>
</reference>
<keyword id="KW-0028">Amino-acid biosynthesis</keyword>
<keyword id="KW-0456">Lyase</keyword>
<keyword id="KW-0479">Metal-binding</keyword>
<keyword id="KW-0486">Methionine biosynthesis</keyword>
<keyword id="KW-0862">Zinc</keyword>
<evidence type="ECO:0000255" key="1">
    <source>
        <dbReference type="HAMAP-Rule" id="MF_01677"/>
    </source>
</evidence>